<comment type="function">
    <text evidence="1">The glycine cleavage system catalyzes the degradation of glycine. The P protein binds the alpha-amino group of glycine through its pyridoxal phosphate cofactor; CO(2) is released and the remaining methylamine moiety is then transferred to the lipoamide cofactor of the H protein.</text>
</comment>
<comment type="catalytic activity">
    <reaction evidence="1">
        <text>N(6)-[(R)-lipoyl]-L-lysyl-[glycine-cleavage complex H protein] + glycine + H(+) = N(6)-[(R)-S(8)-aminomethyldihydrolipoyl]-L-lysyl-[glycine-cleavage complex H protein] + CO2</text>
        <dbReference type="Rhea" id="RHEA:24304"/>
        <dbReference type="Rhea" id="RHEA-COMP:10494"/>
        <dbReference type="Rhea" id="RHEA-COMP:10495"/>
        <dbReference type="ChEBI" id="CHEBI:15378"/>
        <dbReference type="ChEBI" id="CHEBI:16526"/>
        <dbReference type="ChEBI" id="CHEBI:57305"/>
        <dbReference type="ChEBI" id="CHEBI:83099"/>
        <dbReference type="ChEBI" id="CHEBI:83143"/>
        <dbReference type="EC" id="1.4.4.2"/>
    </reaction>
</comment>
<comment type="cofactor">
    <cofactor evidence="1">
        <name>pyridoxal 5'-phosphate</name>
        <dbReference type="ChEBI" id="CHEBI:597326"/>
    </cofactor>
</comment>
<comment type="subunit">
    <text evidence="1">The glycine cleavage system is composed of four proteins: P, T, L and H.</text>
</comment>
<comment type="similarity">
    <text evidence="1">Belongs to the GcvP family.</text>
</comment>
<organism>
    <name type="scientific">Rhodopseudomonas palustris (strain ATCC BAA-98 / CGA009)</name>
    <dbReference type="NCBI Taxonomy" id="258594"/>
    <lineage>
        <taxon>Bacteria</taxon>
        <taxon>Pseudomonadati</taxon>
        <taxon>Pseudomonadota</taxon>
        <taxon>Alphaproteobacteria</taxon>
        <taxon>Hyphomicrobiales</taxon>
        <taxon>Nitrobacteraceae</taxon>
        <taxon>Rhodopseudomonas</taxon>
    </lineage>
</organism>
<protein>
    <recommendedName>
        <fullName evidence="1">Glycine dehydrogenase (decarboxylating)</fullName>
        <ecNumber evidence="1">1.4.4.2</ecNumber>
    </recommendedName>
    <alternativeName>
        <fullName evidence="1">Glycine cleavage system P-protein</fullName>
    </alternativeName>
    <alternativeName>
        <fullName evidence="1">Glycine decarboxylase</fullName>
    </alternativeName>
    <alternativeName>
        <fullName evidence="1">Glycine dehydrogenase (aminomethyl-transferring)</fullName>
    </alternativeName>
</protein>
<gene>
    <name evidence="1" type="primary">gcvP</name>
    <name type="ordered locus">RPA3850</name>
</gene>
<sequence>MTPLRFPSNLPLRAVAFDEDQSMPHRRPIDAANDFVRRHIGPSPQDIAAMLATAGAGSLEQLVAETLPYAIRHREPLKLGAPLTESEALAHMSELGAQNQVFTSLIGQGYYGTILPTVIQRNILENPAWYTAYTPYQPEISQGRLEALFNFQTMICDLTGLDVANASLLDEGTAAAEAMALAERAAAKNAKAFFVDADTHPQTIAVLRTRAEPLGWRIIVGNPETGLEGADVFGALLQYPGSSGRLSDPRAVIAALRKKGALAVVAADLLALTLITPPGELGADIAIGSAQRFGVPMGYGGPHAAYMAVRDSLKRSLPGRIVGLSIDSHGQPAYRLALQTREQHIRREKATSNICTAQVLLAVINAMYAVYHGPDGLAAIARRVHRRTAVLAAGLQQLGFAPTHGNYFDTLTIEVGDRRDAIVARAEAENINLRINASSLGISLDETTTPATVEALWRAFGGSLDYAAVERDAGDALGTALPAALKRTSDYLTQPAFQDYRSETELLRYMRKLSDRDLALDRAMIPLGSCTMKLNATTEMMPLTWPEFGSLHPFVPKAQAAGYHALFERLETWLAEITGYDAVSLQPNSGAQGEYAGLLTIRGYHLSRGEPHRKVCLIPSSAHGTNPASAAMAGMDVVVVACDAHGDVDVDDLRAKAEAHSADLAAVMITYPSTHGVFEEHIREICDIVHAHGGQVYLDGANLNAQVGLARPGSYGADVSHLNLHKTFCIPHGGGGPGMGPIGVKAHLAPFLPGHPAEGEPLNGGLHGGGTVSAAPWGSASILTISYIYILMMGAAGLKRATEIAILNANYIAAKLHPHFPVLYRNPRGRVAHECIIDPRALKTSTGVTVDDIAKRLIDYGFHAPTMSFPVPGTLMIEPTESESKAEIDRFCDAMIAIRREIAQVEAGRYPIEQSPLRHAPHTAHDVTSAEWTRPYPRTEGCFPAPNSRTDKYWSPVGRVDNVYGDRNLICSCPPVEDYALAADYARAAE</sequence>
<name>GCSP_RHOPA</name>
<reference key="1">
    <citation type="journal article" date="2004" name="Nat. Biotechnol.">
        <title>Complete genome sequence of the metabolically versatile photosynthetic bacterium Rhodopseudomonas palustris.</title>
        <authorList>
            <person name="Larimer F.W."/>
            <person name="Chain P."/>
            <person name="Hauser L."/>
            <person name="Lamerdin J.E."/>
            <person name="Malfatti S."/>
            <person name="Do L."/>
            <person name="Land M.L."/>
            <person name="Pelletier D.A."/>
            <person name="Beatty J.T."/>
            <person name="Lang A.S."/>
            <person name="Tabita F.R."/>
            <person name="Gibson J.L."/>
            <person name="Hanson T.E."/>
            <person name="Bobst C."/>
            <person name="Torres y Torres J.L."/>
            <person name="Peres C."/>
            <person name="Harrison F.H."/>
            <person name="Gibson J."/>
            <person name="Harwood C.S."/>
        </authorList>
    </citation>
    <scope>NUCLEOTIDE SEQUENCE [LARGE SCALE GENOMIC DNA]</scope>
    <source>
        <strain>ATCC BAA-98 / CGA009</strain>
    </source>
</reference>
<keyword id="KW-0560">Oxidoreductase</keyword>
<keyword id="KW-0663">Pyridoxal phosphate</keyword>
<proteinExistence type="inferred from homology"/>
<evidence type="ECO:0000255" key="1">
    <source>
        <dbReference type="HAMAP-Rule" id="MF_00711"/>
    </source>
</evidence>
<accession>Q6N344</accession>
<dbReference type="EC" id="1.4.4.2" evidence="1"/>
<dbReference type="EMBL" id="BX572605">
    <property type="protein sequence ID" value="CAE29291.1"/>
    <property type="molecule type" value="Genomic_DNA"/>
</dbReference>
<dbReference type="SMR" id="Q6N344"/>
<dbReference type="STRING" id="258594.RPA3850"/>
<dbReference type="eggNOG" id="COG0403">
    <property type="taxonomic scope" value="Bacteria"/>
</dbReference>
<dbReference type="eggNOG" id="COG1003">
    <property type="taxonomic scope" value="Bacteria"/>
</dbReference>
<dbReference type="HOGENOM" id="CLU_004620_2_1_5"/>
<dbReference type="PhylomeDB" id="Q6N344"/>
<dbReference type="GO" id="GO:0005829">
    <property type="term" value="C:cytosol"/>
    <property type="evidence" value="ECO:0007669"/>
    <property type="project" value="TreeGrafter"/>
</dbReference>
<dbReference type="GO" id="GO:0005960">
    <property type="term" value="C:glycine cleavage complex"/>
    <property type="evidence" value="ECO:0007669"/>
    <property type="project" value="TreeGrafter"/>
</dbReference>
<dbReference type="GO" id="GO:0016594">
    <property type="term" value="F:glycine binding"/>
    <property type="evidence" value="ECO:0007669"/>
    <property type="project" value="TreeGrafter"/>
</dbReference>
<dbReference type="GO" id="GO:0004375">
    <property type="term" value="F:glycine dehydrogenase (decarboxylating) activity"/>
    <property type="evidence" value="ECO:0007669"/>
    <property type="project" value="UniProtKB-EC"/>
</dbReference>
<dbReference type="GO" id="GO:0030170">
    <property type="term" value="F:pyridoxal phosphate binding"/>
    <property type="evidence" value="ECO:0007669"/>
    <property type="project" value="TreeGrafter"/>
</dbReference>
<dbReference type="GO" id="GO:0019464">
    <property type="term" value="P:glycine decarboxylation via glycine cleavage system"/>
    <property type="evidence" value="ECO:0007669"/>
    <property type="project" value="UniProtKB-UniRule"/>
</dbReference>
<dbReference type="CDD" id="cd00613">
    <property type="entry name" value="GDC-P"/>
    <property type="match status" value="2"/>
</dbReference>
<dbReference type="FunFam" id="3.40.640.10:FF:000005">
    <property type="entry name" value="Glycine dehydrogenase (decarboxylating), mitochondrial"/>
    <property type="match status" value="1"/>
</dbReference>
<dbReference type="FunFam" id="3.90.1150.10:FF:000007">
    <property type="entry name" value="Glycine dehydrogenase (decarboxylating), mitochondrial"/>
    <property type="match status" value="1"/>
</dbReference>
<dbReference type="FunFam" id="3.40.640.10:FF:000007">
    <property type="entry name" value="glycine dehydrogenase (Decarboxylating), mitochondrial"/>
    <property type="match status" value="1"/>
</dbReference>
<dbReference type="Gene3D" id="3.90.1150.10">
    <property type="entry name" value="Aspartate Aminotransferase, domain 1"/>
    <property type="match status" value="2"/>
</dbReference>
<dbReference type="Gene3D" id="3.40.640.10">
    <property type="entry name" value="Type I PLP-dependent aspartate aminotransferase-like (Major domain)"/>
    <property type="match status" value="2"/>
</dbReference>
<dbReference type="HAMAP" id="MF_00711">
    <property type="entry name" value="GcvP"/>
    <property type="match status" value="1"/>
</dbReference>
<dbReference type="InterPro" id="IPR003437">
    <property type="entry name" value="GcvP"/>
</dbReference>
<dbReference type="InterPro" id="IPR049316">
    <property type="entry name" value="GDC-P_C"/>
</dbReference>
<dbReference type="InterPro" id="IPR049315">
    <property type="entry name" value="GDC-P_N"/>
</dbReference>
<dbReference type="InterPro" id="IPR020581">
    <property type="entry name" value="GDC_P"/>
</dbReference>
<dbReference type="InterPro" id="IPR015424">
    <property type="entry name" value="PyrdxlP-dep_Trfase"/>
</dbReference>
<dbReference type="InterPro" id="IPR015421">
    <property type="entry name" value="PyrdxlP-dep_Trfase_major"/>
</dbReference>
<dbReference type="InterPro" id="IPR015422">
    <property type="entry name" value="PyrdxlP-dep_Trfase_small"/>
</dbReference>
<dbReference type="NCBIfam" id="TIGR00461">
    <property type="entry name" value="gcvP"/>
    <property type="match status" value="1"/>
</dbReference>
<dbReference type="NCBIfam" id="NF003346">
    <property type="entry name" value="PRK04366.1"/>
    <property type="match status" value="1"/>
</dbReference>
<dbReference type="PANTHER" id="PTHR11773:SF1">
    <property type="entry name" value="GLYCINE DEHYDROGENASE (DECARBOXYLATING), MITOCHONDRIAL"/>
    <property type="match status" value="1"/>
</dbReference>
<dbReference type="PANTHER" id="PTHR11773">
    <property type="entry name" value="GLYCINE DEHYDROGENASE, DECARBOXYLATING"/>
    <property type="match status" value="1"/>
</dbReference>
<dbReference type="Pfam" id="PF21478">
    <property type="entry name" value="GcvP2_C"/>
    <property type="match status" value="1"/>
</dbReference>
<dbReference type="Pfam" id="PF02347">
    <property type="entry name" value="GDC-P"/>
    <property type="match status" value="2"/>
</dbReference>
<dbReference type="SUPFAM" id="SSF53383">
    <property type="entry name" value="PLP-dependent transferases"/>
    <property type="match status" value="2"/>
</dbReference>
<feature type="chain" id="PRO_0000227125" description="Glycine dehydrogenase (decarboxylating)">
    <location>
        <begin position="1"/>
        <end position="990"/>
    </location>
</feature>
<feature type="modified residue" description="N6-(pyridoxal phosphate)lysine" evidence="1">
    <location>
        <position position="726"/>
    </location>
</feature>